<reference key="1">
    <citation type="journal article" date="2008" name="DNA Res.">
        <title>Complete genome sequence and comparative analysis of the wild-type commensal Escherichia coli strain SE11 isolated from a healthy adult.</title>
        <authorList>
            <person name="Oshima K."/>
            <person name="Toh H."/>
            <person name="Ogura Y."/>
            <person name="Sasamoto H."/>
            <person name="Morita H."/>
            <person name="Park S.-H."/>
            <person name="Ooka T."/>
            <person name="Iyoda S."/>
            <person name="Taylor T.D."/>
            <person name="Hayashi T."/>
            <person name="Itoh K."/>
            <person name="Hattori M."/>
        </authorList>
    </citation>
    <scope>NUCLEOTIDE SEQUENCE [LARGE SCALE GENOMIC DNA]</scope>
    <source>
        <strain>SE11</strain>
    </source>
</reference>
<dbReference type="EMBL" id="AP009240">
    <property type="protein sequence ID" value="BAG76505.1"/>
    <property type="molecule type" value="Genomic_DNA"/>
</dbReference>
<dbReference type="RefSeq" id="WP_001288850.1">
    <property type="nucleotide sequence ID" value="NC_011415.1"/>
</dbReference>
<dbReference type="SMR" id="B6I8Z4"/>
<dbReference type="GeneID" id="93776493"/>
<dbReference type="KEGG" id="ecy:ECSE_0981"/>
<dbReference type="HOGENOM" id="CLU_049853_0_0_6"/>
<dbReference type="Proteomes" id="UP000008199">
    <property type="component" value="Chromosome"/>
</dbReference>
<dbReference type="GO" id="GO:0005737">
    <property type="term" value="C:cytoplasm"/>
    <property type="evidence" value="ECO:0007669"/>
    <property type="project" value="UniProtKB-UniRule"/>
</dbReference>
<dbReference type="GO" id="GO:0009295">
    <property type="term" value="C:nucleoid"/>
    <property type="evidence" value="ECO:0007669"/>
    <property type="project" value="UniProtKB-SubCell"/>
</dbReference>
<dbReference type="GO" id="GO:0005509">
    <property type="term" value="F:calcium ion binding"/>
    <property type="evidence" value="ECO:0007669"/>
    <property type="project" value="UniProtKB-UniRule"/>
</dbReference>
<dbReference type="GO" id="GO:0051301">
    <property type="term" value="P:cell division"/>
    <property type="evidence" value="ECO:0007669"/>
    <property type="project" value="UniProtKB-KW"/>
</dbReference>
<dbReference type="GO" id="GO:0030261">
    <property type="term" value="P:chromosome condensation"/>
    <property type="evidence" value="ECO:0007669"/>
    <property type="project" value="UniProtKB-KW"/>
</dbReference>
<dbReference type="GO" id="GO:0007059">
    <property type="term" value="P:chromosome segregation"/>
    <property type="evidence" value="ECO:0007669"/>
    <property type="project" value="UniProtKB-UniRule"/>
</dbReference>
<dbReference type="GO" id="GO:0006260">
    <property type="term" value="P:DNA replication"/>
    <property type="evidence" value="ECO:0007669"/>
    <property type="project" value="UniProtKB-UniRule"/>
</dbReference>
<dbReference type="CDD" id="cd16337">
    <property type="entry name" value="MukF_C"/>
    <property type="match status" value="1"/>
</dbReference>
<dbReference type="CDD" id="cd16335">
    <property type="entry name" value="MukF_N"/>
    <property type="match status" value="1"/>
</dbReference>
<dbReference type="Gene3D" id="1.20.58.590">
    <property type="entry name" value="Chromosome partition protein MukF, middle domain"/>
    <property type="match status" value="1"/>
</dbReference>
<dbReference type="Gene3D" id="1.10.225.40">
    <property type="entry name" value="MukF, C-terminal domain"/>
    <property type="match status" value="1"/>
</dbReference>
<dbReference type="Gene3D" id="1.10.10.10">
    <property type="entry name" value="Winged helix-like DNA-binding domain superfamily/Winged helix DNA-binding domain"/>
    <property type="match status" value="1"/>
</dbReference>
<dbReference type="HAMAP" id="MF_01803">
    <property type="entry name" value="MukF"/>
    <property type="match status" value="1"/>
</dbReference>
<dbReference type="InterPro" id="IPR005582">
    <property type="entry name" value="Chromosome_partition_MukF"/>
</dbReference>
<dbReference type="InterPro" id="IPR033441">
    <property type="entry name" value="MukF_C"/>
</dbReference>
<dbReference type="InterPro" id="IPR038198">
    <property type="entry name" value="MukF_C_sf"/>
</dbReference>
<dbReference type="InterPro" id="IPR033440">
    <property type="entry name" value="MukF_M"/>
</dbReference>
<dbReference type="InterPro" id="IPR036141">
    <property type="entry name" value="MukF_M_sp"/>
</dbReference>
<dbReference type="InterPro" id="IPR033439">
    <property type="entry name" value="MukF_WHTH"/>
</dbReference>
<dbReference type="InterPro" id="IPR036388">
    <property type="entry name" value="WH-like_DNA-bd_sf"/>
</dbReference>
<dbReference type="InterPro" id="IPR036390">
    <property type="entry name" value="WH_DNA-bd_sf"/>
</dbReference>
<dbReference type="NCBIfam" id="NF003615">
    <property type="entry name" value="PRK05260.1"/>
    <property type="match status" value="1"/>
</dbReference>
<dbReference type="Pfam" id="PF03882">
    <property type="entry name" value="KicB"/>
    <property type="match status" value="1"/>
</dbReference>
<dbReference type="Pfam" id="PF17193">
    <property type="entry name" value="MukF_C"/>
    <property type="match status" value="1"/>
</dbReference>
<dbReference type="Pfam" id="PF17192">
    <property type="entry name" value="MukF_M"/>
    <property type="match status" value="1"/>
</dbReference>
<dbReference type="PIRSF" id="PIRSF018282">
    <property type="entry name" value="MukF"/>
    <property type="match status" value="1"/>
</dbReference>
<dbReference type="SUPFAM" id="SSF140570">
    <property type="entry name" value="MukF C-terminal domain-like"/>
    <property type="match status" value="1"/>
</dbReference>
<dbReference type="SUPFAM" id="SSF46785">
    <property type="entry name" value="Winged helix' DNA-binding domain"/>
    <property type="match status" value="1"/>
</dbReference>
<accession>B6I8Z4</accession>
<evidence type="ECO:0000255" key="1">
    <source>
        <dbReference type="HAMAP-Rule" id="MF_01803"/>
    </source>
</evidence>
<feature type="chain" id="PRO_1000187507" description="Chromosome partition protein MukF">
    <location>
        <begin position="1"/>
        <end position="440"/>
    </location>
</feature>
<feature type="region of interest" description="Leucine-zipper">
    <location>
        <begin position="208"/>
        <end position="236"/>
    </location>
</feature>
<organism>
    <name type="scientific">Escherichia coli (strain SE11)</name>
    <dbReference type="NCBI Taxonomy" id="409438"/>
    <lineage>
        <taxon>Bacteria</taxon>
        <taxon>Pseudomonadati</taxon>
        <taxon>Pseudomonadota</taxon>
        <taxon>Gammaproteobacteria</taxon>
        <taxon>Enterobacterales</taxon>
        <taxon>Enterobacteriaceae</taxon>
        <taxon>Escherichia</taxon>
    </lineage>
</organism>
<comment type="function">
    <text evidence="1">Involved in chromosome condensation, segregation and cell cycle progression. May participate in facilitating chromosome segregation by condensation DNA from both sides of a centrally located replisome during cell division. Not required for mini-F plasmid partitioning. Probably acts via its interaction with MukB and MukE. Overexpression results in anucleate cells. It has a calcium binding activity.</text>
</comment>
<comment type="subunit">
    <text evidence="1">Interacts, and probably forms a ternary complex, with MukE and MukB via its C-terminal region. The complex formation is stimulated by calcium or magnesium. It is required for an interaction between MukE and MukB.</text>
</comment>
<comment type="subcellular location">
    <subcellularLocation>
        <location evidence="1">Cytoplasm</location>
        <location evidence="1">Nucleoid</location>
    </subcellularLocation>
    <text evidence="1">Restricted to the nucleoid region.</text>
</comment>
<comment type="similarity">
    <text evidence="1">Belongs to the MukF family.</text>
</comment>
<gene>
    <name evidence="1" type="primary">mukF</name>
    <name type="ordered locus">ECSE_0981</name>
</gene>
<protein>
    <recommendedName>
        <fullName evidence="1">Chromosome partition protein MukF</fullName>
    </recommendedName>
</protein>
<proteinExistence type="inferred from homology"/>
<sequence length="440" mass="50579">MSEFSQTVPELVAWARKNDFSISLPVDRLSFLLAVATLNGERLDGEMSEGELVDAFRHVSDAFEQTSETIGVRANNAINDMVRQRLLNRFTSEQAEGNAIYRLTPLGIGITDYYIRQREFSTLRLSMQLSIVAGELKRAADAAEEGGDEFHWHRNVYAPLKYSVAEIFDSIDLTQRLMDEQQQQVKDDIAQLLNKDWRAAISSCELLLSETSGTLRELQDTLEAAGDKLQANLLRIQDATMTHDDLHFVDRLVFDLQSKLDRIISWGQQSIDLWIGYDRHVHKFIRTAIDMDKNRVFAQRLRQSVQTYFDEPWALTYANADRLLDMRDEEMALRDEEVTGELPEDLEYEEFNEIREQLAAIIEEQLAVYKTRQVPLDLGLVVREYLSQYPRARHFDVARIVIDQAVRLGVAQADFTGLPAKWQPINDYGAKVQAHVIDKY</sequence>
<keyword id="KW-0106">Calcium</keyword>
<keyword id="KW-0131">Cell cycle</keyword>
<keyword id="KW-0132">Cell division</keyword>
<keyword id="KW-0159">Chromosome partition</keyword>
<keyword id="KW-0963">Cytoplasm</keyword>
<keyword id="KW-0226">DNA condensation</keyword>
<name>MUKF_ECOSE</name>